<feature type="chain" id="PRO_0000161346" description="Aspartate ammonia-lyase">
    <location>
        <begin position="1"/>
        <end position="478"/>
    </location>
</feature>
<feature type="region of interest" description="SS loop" evidence="2">
    <location>
        <begin position="320"/>
        <end position="329"/>
    </location>
</feature>
<feature type="active site" description="Proton acceptor" evidence="2">
    <location>
        <position position="321"/>
    </location>
</feature>
<feature type="binding site" evidence="2">
    <location>
        <position position="104"/>
    </location>
    <ligand>
        <name>L-aspartate</name>
        <dbReference type="ChEBI" id="CHEBI:29991"/>
    </ligand>
</feature>
<feature type="binding site" evidence="2">
    <location>
        <position position="143"/>
    </location>
    <ligand>
        <name>L-aspartate</name>
        <dbReference type="ChEBI" id="CHEBI:29991"/>
    </ligand>
</feature>
<feature type="binding site" evidence="2">
    <location>
        <position position="144"/>
    </location>
    <ligand>
        <name>L-aspartate</name>
        <dbReference type="ChEBI" id="CHEBI:29991"/>
    </ligand>
</feature>
<feature type="binding site" evidence="2">
    <location>
        <position position="145"/>
    </location>
    <ligand>
        <name>L-aspartate</name>
        <dbReference type="ChEBI" id="CHEBI:29991"/>
    </ligand>
</feature>
<feature type="binding site" evidence="2">
    <location>
        <position position="190"/>
    </location>
    <ligand>
        <name>L-aspartate</name>
        <dbReference type="ChEBI" id="CHEBI:29991"/>
    </ligand>
</feature>
<feature type="binding site" evidence="2">
    <location>
        <position position="322"/>
    </location>
    <ligand>
        <name>L-aspartate</name>
        <dbReference type="ChEBI" id="CHEBI:29991"/>
    </ligand>
</feature>
<feature type="binding site" evidence="2">
    <location>
        <position position="327"/>
    </location>
    <ligand>
        <name>L-aspartate</name>
        <dbReference type="ChEBI" id="CHEBI:29991"/>
    </ligand>
</feature>
<proteinExistence type="inferred from homology"/>
<keyword id="KW-0456">Lyase</keyword>
<keyword id="KW-1185">Reference proteome</keyword>
<comment type="function">
    <text evidence="1">Catalyzes the reversible conversion of L-aspartate to fumarate and ammonia.</text>
</comment>
<comment type="catalytic activity">
    <reaction evidence="1">
        <text>L-aspartate = fumarate + NH4(+)</text>
        <dbReference type="Rhea" id="RHEA:16601"/>
        <dbReference type="ChEBI" id="CHEBI:28938"/>
        <dbReference type="ChEBI" id="CHEBI:29806"/>
        <dbReference type="ChEBI" id="CHEBI:29991"/>
        <dbReference type="EC" id="4.3.1.1"/>
    </reaction>
</comment>
<comment type="subunit">
    <text evidence="1">Homotetramer.</text>
</comment>
<comment type="similarity">
    <text evidence="3">Belongs to the class-II fumarase/aspartase family. Aspartase subfamily.</text>
</comment>
<comment type="sequence caution" evidence="3">
    <conflict type="erroneous initiation">
        <sequence resource="EMBL-CDS" id="AAN45711"/>
    </conflict>
    <text>Extended N-terminus.</text>
</comment>
<comment type="sequence caution" evidence="3">
    <conflict type="erroneous initiation">
        <sequence resource="EMBL-CDS" id="AAP19497"/>
    </conflict>
    <text>Extended N-terminus.</text>
</comment>
<evidence type="ECO:0000250" key="1">
    <source>
        <dbReference type="UniProtKB" id="P0AC38"/>
    </source>
</evidence>
<evidence type="ECO:0000250" key="2">
    <source>
        <dbReference type="UniProtKB" id="Q9LCC6"/>
    </source>
</evidence>
<evidence type="ECO:0000305" key="3"/>
<accession>P0AC40</accession>
<accession>P04422</accession>
<accession>P78140</accession>
<reference key="1">
    <citation type="journal article" date="2002" name="Nucleic Acids Res.">
        <title>Genome sequence of Shigella flexneri 2a: insights into pathogenicity through comparison with genomes of Escherichia coli K12 and O157.</title>
        <authorList>
            <person name="Jin Q."/>
            <person name="Yuan Z."/>
            <person name="Xu J."/>
            <person name="Wang Y."/>
            <person name="Shen Y."/>
            <person name="Lu W."/>
            <person name="Wang J."/>
            <person name="Liu H."/>
            <person name="Yang J."/>
            <person name="Yang F."/>
            <person name="Zhang X."/>
            <person name="Zhang J."/>
            <person name="Yang G."/>
            <person name="Wu H."/>
            <person name="Qu D."/>
            <person name="Dong J."/>
            <person name="Sun L."/>
            <person name="Xue Y."/>
            <person name="Zhao A."/>
            <person name="Gao Y."/>
            <person name="Zhu J."/>
            <person name="Kan B."/>
            <person name="Ding K."/>
            <person name="Chen S."/>
            <person name="Cheng H."/>
            <person name="Yao Z."/>
            <person name="He B."/>
            <person name="Chen R."/>
            <person name="Ma D."/>
            <person name="Qiang B."/>
            <person name="Wen Y."/>
            <person name="Hou Y."/>
            <person name="Yu J."/>
        </authorList>
    </citation>
    <scope>NUCLEOTIDE SEQUENCE [LARGE SCALE GENOMIC DNA]</scope>
    <source>
        <strain>301 / Serotype 2a</strain>
    </source>
</reference>
<reference key="2">
    <citation type="journal article" date="2003" name="Infect. Immun.">
        <title>Complete genome sequence and comparative genomics of Shigella flexneri serotype 2a strain 2457T.</title>
        <authorList>
            <person name="Wei J."/>
            <person name="Goldberg M.B."/>
            <person name="Burland V."/>
            <person name="Venkatesan M.M."/>
            <person name="Deng W."/>
            <person name="Fournier G."/>
            <person name="Mayhew G.F."/>
            <person name="Plunkett G. III"/>
            <person name="Rose D.J."/>
            <person name="Darling A."/>
            <person name="Mau B."/>
            <person name="Perna N.T."/>
            <person name="Payne S.M."/>
            <person name="Runyen-Janecky L.J."/>
            <person name="Zhou S."/>
            <person name="Schwartz D.C."/>
            <person name="Blattner F.R."/>
        </authorList>
    </citation>
    <scope>NUCLEOTIDE SEQUENCE [LARGE SCALE GENOMIC DNA]</scope>
    <source>
        <strain>ATCC 700930 / 2457T / Serotype 2a</strain>
    </source>
</reference>
<protein>
    <recommendedName>
        <fullName evidence="1">Aspartate ammonia-lyase</fullName>
        <shortName evidence="1">Aspartase</shortName>
        <ecNumber evidence="1">4.3.1.1</ecNumber>
    </recommendedName>
</protein>
<organism>
    <name type="scientific">Shigella flexneri</name>
    <dbReference type="NCBI Taxonomy" id="623"/>
    <lineage>
        <taxon>Bacteria</taxon>
        <taxon>Pseudomonadati</taxon>
        <taxon>Pseudomonadota</taxon>
        <taxon>Gammaproteobacteria</taxon>
        <taxon>Enterobacterales</taxon>
        <taxon>Enterobacteriaceae</taxon>
        <taxon>Shigella</taxon>
    </lineage>
</organism>
<dbReference type="EC" id="4.3.1.1" evidence="1"/>
<dbReference type="EMBL" id="AE005674">
    <property type="protein sequence ID" value="AAN45711.2"/>
    <property type="status" value="ALT_INIT"/>
    <property type="molecule type" value="Genomic_DNA"/>
</dbReference>
<dbReference type="EMBL" id="AE014073">
    <property type="protein sequence ID" value="AAP19497.1"/>
    <property type="status" value="ALT_INIT"/>
    <property type="molecule type" value="Genomic_DNA"/>
</dbReference>
<dbReference type="RefSeq" id="NP_710004.2">
    <property type="nucleotide sequence ID" value="NC_004337.2"/>
</dbReference>
<dbReference type="RefSeq" id="WP_000069437.1">
    <property type="nucleotide sequence ID" value="NZ_WPGW01000108.1"/>
</dbReference>
<dbReference type="SMR" id="P0AC40"/>
<dbReference type="STRING" id="198214.SF4293"/>
<dbReference type="PaxDb" id="198214-SF4293"/>
<dbReference type="GeneID" id="1026585"/>
<dbReference type="GeneID" id="93777685"/>
<dbReference type="KEGG" id="sfl:SF4293"/>
<dbReference type="KEGG" id="sfx:S4560"/>
<dbReference type="PATRIC" id="fig|198214.7.peg.5063"/>
<dbReference type="HOGENOM" id="CLU_021594_4_0_6"/>
<dbReference type="Proteomes" id="UP000001006">
    <property type="component" value="Chromosome"/>
</dbReference>
<dbReference type="Proteomes" id="UP000002673">
    <property type="component" value="Chromosome"/>
</dbReference>
<dbReference type="GO" id="GO:0005829">
    <property type="term" value="C:cytosol"/>
    <property type="evidence" value="ECO:0007669"/>
    <property type="project" value="TreeGrafter"/>
</dbReference>
<dbReference type="GO" id="GO:0008797">
    <property type="term" value="F:aspartate ammonia-lyase activity"/>
    <property type="evidence" value="ECO:0007669"/>
    <property type="project" value="UniProtKB-EC"/>
</dbReference>
<dbReference type="GO" id="GO:0006531">
    <property type="term" value="P:aspartate metabolic process"/>
    <property type="evidence" value="ECO:0007669"/>
    <property type="project" value="InterPro"/>
</dbReference>
<dbReference type="GO" id="GO:0006099">
    <property type="term" value="P:tricarboxylic acid cycle"/>
    <property type="evidence" value="ECO:0007669"/>
    <property type="project" value="InterPro"/>
</dbReference>
<dbReference type="CDD" id="cd01357">
    <property type="entry name" value="Aspartase"/>
    <property type="match status" value="1"/>
</dbReference>
<dbReference type="FunFam" id="1.10.40.30:FF:000003">
    <property type="entry name" value="Aspartate ammonia-lyase"/>
    <property type="match status" value="1"/>
</dbReference>
<dbReference type="FunFam" id="1.10.275.10:FF:000001">
    <property type="entry name" value="Fumarate hydratase, mitochondrial"/>
    <property type="match status" value="1"/>
</dbReference>
<dbReference type="FunFam" id="1.20.200.10:FF:000001">
    <property type="entry name" value="Fumarate hydratase, mitochondrial"/>
    <property type="match status" value="1"/>
</dbReference>
<dbReference type="Gene3D" id="1.10.40.30">
    <property type="entry name" value="Fumarase/aspartase (C-terminal domain)"/>
    <property type="match status" value="1"/>
</dbReference>
<dbReference type="Gene3D" id="1.20.200.10">
    <property type="entry name" value="Fumarase/aspartase (Central domain)"/>
    <property type="match status" value="1"/>
</dbReference>
<dbReference type="Gene3D" id="1.10.275.10">
    <property type="entry name" value="Fumarase/aspartase (N-terminal domain)"/>
    <property type="match status" value="1"/>
</dbReference>
<dbReference type="InterPro" id="IPR004708">
    <property type="entry name" value="ApsA"/>
</dbReference>
<dbReference type="InterPro" id="IPR051546">
    <property type="entry name" value="Aspartate_Ammonia-Lyase"/>
</dbReference>
<dbReference type="InterPro" id="IPR024083">
    <property type="entry name" value="Fumarase/histidase_N"/>
</dbReference>
<dbReference type="InterPro" id="IPR018951">
    <property type="entry name" value="Fumarase_C_C"/>
</dbReference>
<dbReference type="InterPro" id="IPR020557">
    <property type="entry name" value="Fumarate_lyase_CS"/>
</dbReference>
<dbReference type="InterPro" id="IPR000362">
    <property type="entry name" value="Fumarate_lyase_fam"/>
</dbReference>
<dbReference type="InterPro" id="IPR022761">
    <property type="entry name" value="Fumarate_lyase_N"/>
</dbReference>
<dbReference type="InterPro" id="IPR008948">
    <property type="entry name" value="L-Aspartase-like"/>
</dbReference>
<dbReference type="NCBIfam" id="TIGR00839">
    <property type="entry name" value="aspA"/>
    <property type="match status" value="1"/>
</dbReference>
<dbReference type="NCBIfam" id="NF008909">
    <property type="entry name" value="PRK12273.1"/>
    <property type="match status" value="1"/>
</dbReference>
<dbReference type="PANTHER" id="PTHR42696">
    <property type="entry name" value="ASPARTATE AMMONIA-LYASE"/>
    <property type="match status" value="1"/>
</dbReference>
<dbReference type="PANTHER" id="PTHR42696:SF2">
    <property type="entry name" value="ASPARTATE AMMONIA-LYASE"/>
    <property type="match status" value="1"/>
</dbReference>
<dbReference type="Pfam" id="PF10415">
    <property type="entry name" value="FumaraseC_C"/>
    <property type="match status" value="1"/>
</dbReference>
<dbReference type="Pfam" id="PF00206">
    <property type="entry name" value="Lyase_1"/>
    <property type="match status" value="1"/>
</dbReference>
<dbReference type="PRINTS" id="PR00145">
    <property type="entry name" value="ARGSUCLYASE"/>
</dbReference>
<dbReference type="PRINTS" id="PR00149">
    <property type="entry name" value="FUMRATELYASE"/>
</dbReference>
<dbReference type="SUPFAM" id="SSF48557">
    <property type="entry name" value="L-aspartase-like"/>
    <property type="match status" value="1"/>
</dbReference>
<dbReference type="PROSITE" id="PS00163">
    <property type="entry name" value="FUMARATE_LYASES"/>
    <property type="match status" value="1"/>
</dbReference>
<sequence>MSNNIRIEEDLLGTREVPADAYYGVHTLRAIENFYISNNKISDIPEFVRGMVMVKKAAAMANKELQTIPKSVANAIIAACDEVLNNGKCMDQFPVDVYQGGAGTSVNMNTNEVLANIGLELMGHQKGEYQYLNPNDHVNKCQSTNDAYPTGFRIAVYSSLIKLVDAINQLREGFERKAVEFQDILKMGRTQLQDAVPMTLGQEFRAFSILLKEEVKNIQRTAELLLEVNLGATAIGTGLNTPKEYSPLAVKKLAEVTGFPCVPAEDLIEATSDCGAYVMVHGALKRLAVKMSKICNDLRLLSSGPRAGLNEINLPELQAGSSIMPAKVNPVVPEVVNQVCFKVIGNDTTVTMAAEAGQLQLNVMEPVIGQAMFESVHILTNACYNLLEKCINGITANKEVCEGYVYNSIGIVTYLNPFIGHHNGDIVGKICAETGKSVREVVLERGLLTEAELDDIFSVQNLMHPAYKAKRYTDESEQ</sequence>
<gene>
    <name type="primary">aspA</name>
    <name type="ordered locus">SF4293</name>
    <name type="ordered locus">S4560</name>
</gene>
<name>ASPA_SHIFL</name>